<organism>
    <name type="scientific">Arabidopsis thaliana</name>
    <name type="common">Mouse-ear cress</name>
    <dbReference type="NCBI Taxonomy" id="3702"/>
    <lineage>
        <taxon>Eukaryota</taxon>
        <taxon>Viridiplantae</taxon>
        <taxon>Streptophyta</taxon>
        <taxon>Embryophyta</taxon>
        <taxon>Tracheophyta</taxon>
        <taxon>Spermatophyta</taxon>
        <taxon>Magnoliopsida</taxon>
        <taxon>eudicotyledons</taxon>
        <taxon>Gunneridae</taxon>
        <taxon>Pentapetalae</taxon>
        <taxon>rosids</taxon>
        <taxon>malvids</taxon>
        <taxon>Brassicales</taxon>
        <taxon>Brassicaceae</taxon>
        <taxon>Camelineae</taxon>
        <taxon>Arabidopsis</taxon>
    </lineage>
</organism>
<proteinExistence type="evidence at transcript level"/>
<keyword id="KW-0238">DNA-binding</keyword>
<keyword id="KW-0479">Metal-binding</keyword>
<keyword id="KW-0539">Nucleus</keyword>
<keyword id="KW-0597">Phosphoprotein</keyword>
<keyword id="KW-1185">Reference proteome</keyword>
<keyword id="KW-0677">Repeat</keyword>
<keyword id="KW-0804">Transcription</keyword>
<keyword id="KW-0805">Transcription regulation</keyword>
<keyword id="KW-0862">Zinc</keyword>
<keyword id="KW-0863">Zinc-finger</keyword>
<accession>F4JYZ8</accession>
<accession>Q4PSA5</accession>
<accession>Q9FKK0</accession>
<dbReference type="EMBL" id="AB011483">
    <property type="protein sequence ID" value="BAB08230.1"/>
    <property type="status" value="ALT_SEQ"/>
    <property type="molecule type" value="Genomic_DNA"/>
</dbReference>
<dbReference type="EMBL" id="CP002688">
    <property type="protein sequence ID" value="AED97334.1"/>
    <property type="molecule type" value="Genomic_DNA"/>
</dbReference>
<dbReference type="EMBL" id="DQ056731">
    <property type="protein sequence ID" value="AAY78875.1"/>
    <property type="molecule type" value="mRNA"/>
</dbReference>
<dbReference type="EMBL" id="BT026428">
    <property type="protein sequence ID" value="ABH04535.1"/>
    <property type="molecule type" value="mRNA"/>
</dbReference>
<dbReference type="RefSeq" id="NP_200855.4">
    <property type="nucleotide sequence ID" value="NM_125440.4"/>
</dbReference>
<dbReference type="STRING" id="3702.F4JYZ8"/>
<dbReference type="PaxDb" id="3702-AT5G60470.1"/>
<dbReference type="EnsemblPlants" id="AT5G60470.1">
    <property type="protein sequence ID" value="AT5G60470.1"/>
    <property type="gene ID" value="AT5G60470"/>
</dbReference>
<dbReference type="GeneID" id="836168"/>
<dbReference type="Gramene" id="AT5G60470.1">
    <property type="protein sequence ID" value="AT5G60470.1"/>
    <property type="gene ID" value="AT5G60470"/>
</dbReference>
<dbReference type="KEGG" id="ath:AT5G60470"/>
<dbReference type="Araport" id="AT5G60470"/>
<dbReference type="TAIR" id="AT5G60470">
    <property type="gene designation" value="EGRET"/>
</dbReference>
<dbReference type="eggNOG" id="KOG1721">
    <property type="taxonomic scope" value="Eukaryota"/>
</dbReference>
<dbReference type="HOGENOM" id="CLU_014578_3_1_1"/>
<dbReference type="InParanoid" id="F4JYZ8"/>
<dbReference type="PRO" id="PR:F4JYZ8"/>
<dbReference type="Proteomes" id="UP000006548">
    <property type="component" value="Chromosome 5"/>
</dbReference>
<dbReference type="ExpressionAtlas" id="F4JYZ8">
    <property type="expression patterns" value="baseline and differential"/>
</dbReference>
<dbReference type="GO" id="GO:0005634">
    <property type="term" value="C:nucleus"/>
    <property type="evidence" value="ECO:0007669"/>
    <property type="project" value="UniProtKB-SubCell"/>
</dbReference>
<dbReference type="GO" id="GO:0003677">
    <property type="term" value="F:DNA binding"/>
    <property type="evidence" value="ECO:0007669"/>
    <property type="project" value="UniProtKB-KW"/>
</dbReference>
<dbReference type="GO" id="GO:0003700">
    <property type="term" value="F:DNA-binding transcription factor activity"/>
    <property type="evidence" value="ECO:0000250"/>
    <property type="project" value="TAIR"/>
</dbReference>
<dbReference type="GO" id="GO:0008270">
    <property type="term" value="F:zinc ion binding"/>
    <property type="evidence" value="ECO:0007669"/>
    <property type="project" value="UniProtKB-KW"/>
</dbReference>
<dbReference type="GO" id="GO:0006355">
    <property type="term" value="P:regulation of DNA-templated transcription"/>
    <property type="evidence" value="ECO:0000304"/>
    <property type="project" value="TAIR"/>
</dbReference>
<dbReference type="FunFam" id="3.30.160.60:FF:000554">
    <property type="entry name" value="protein indeterminate-domain 12-like"/>
    <property type="match status" value="1"/>
</dbReference>
<dbReference type="FunFam" id="3.30.160.60:FF:000131">
    <property type="entry name" value="protein indeterminate-domain 5, chloroplastic-like"/>
    <property type="match status" value="1"/>
</dbReference>
<dbReference type="Gene3D" id="3.30.160.60">
    <property type="entry name" value="Classic Zinc Finger"/>
    <property type="match status" value="2"/>
</dbReference>
<dbReference type="InterPro" id="IPR055187">
    <property type="entry name" value="C2CH-3rd_BIRD-IDD"/>
</dbReference>
<dbReference type="InterPro" id="IPR055185">
    <property type="entry name" value="C2CH-4th_BIRD-IDD"/>
</dbReference>
<dbReference type="InterPro" id="IPR055186">
    <property type="entry name" value="C2H2-2nd_BIRD-IDD"/>
</dbReference>
<dbReference type="InterPro" id="IPR031140">
    <property type="entry name" value="IDD1-16"/>
</dbReference>
<dbReference type="InterPro" id="IPR036236">
    <property type="entry name" value="Znf_C2H2_sf"/>
</dbReference>
<dbReference type="InterPro" id="IPR013087">
    <property type="entry name" value="Znf_C2H2_type"/>
</dbReference>
<dbReference type="PANTHER" id="PTHR10593:SF231">
    <property type="entry name" value="PROTEIN INDETERMINATE-DOMAIN 13-RELATED"/>
    <property type="match status" value="1"/>
</dbReference>
<dbReference type="PANTHER" id="PTHR10593">
    <property type="entry name" value="SERINE/THREONINE-PROTEIN KINASE RIO"/>
    <property type="match status" value="1"/>
</dbReference>
<dbReference type="Pfam" id="PF22995">
    <property type="entry name" value="C2CH-3rd_BIRD-IDD"/>
    <property type="match status" value="1"/>
</dbReference>
<dbReference type="Pfam" id="PF22992">
    <property type="entry name" value="C2CH-4th_BIRD-IDD"/>
    <property type="match status" value="1"/>
</dbReference>
<dbReference type="Pfam" id="PF22996">
    <property type="entry name" value="C2H2-2nd_BIRD-IDD"/>
    <property type="match status" value="1"/>
</dbReference>
<dbReference type="Pfam" id="PF12874">
    <property type="entry name" value="zf-met"/>
    <property type="match status" value="1"/>
</dbReference>
<dbReference type="SMART" id="SM00355">
    <property type="entry name" value="ZnF_C2H2"/>
    <property type="match status" value="3"/>
</dbReference>
<dbReference type="SUPFAM" id="SSF57667">
    <property type="entry name" value="beta-beta-alpha zinc fingers"/>
    <property type="match status" value="1"/>
</dbReference>
<dbReference type="PROSITE" id="PS00028">
    <property type="entry name" value="ZINC_FINGER_C2H2_1"/>
    <property type="match status" value="1"/>
</dbReference>
<dbReference type="PROSITE" id="PS50157">
    <property type="entry name" value="ZINC_FINGER_C2H2_2"/>
    <property type="match status" value="1"/>
</dbReference>
<reference key="1">
    <citation type="journal article" date="1998" name="DNA Res.">
        <title>Structural analysis of Arabidopsis thaliana chromosome 5. V. Sequence features of the regions of 1,381,565 bp covered by twenty one physically assigned P1 and TAC clones.</title>
        <authorList>
            <person name="Kaneko T."/>
            <person name="Kotani H."/>
            <person name="Nakamura Y."/>
            <person name="Sato S."/>
            <person name="Asamizu E."/>
            <person name="Miyajima N."/>
            <person name="Tabata S."/>
        </authorList>
    </citation>
    <scope>NUCLEOTIDE SEQUENCE [LARGE SCALE GENOMIC DNA]</scope>
    <source>
        <strain>cv. Columbia</strain>
    </source>
</reference>
<reference key="2">
    <citation type="journal article" date="2017" name="Plant J.">
        <title>Araport11: a complete reannotation of the Arabidopsis thaliana reference genome.</title>
        <authorList>
            <person name="Cheng C.Y."/>
            <person name="Krishnakumar V."/>
            <person name="Chan A.P."/>
            <person name="Thibaud-Nissen F."/>
            <person name="Schobel S."/>
            <person name="Town C.D."/>
        </authorList>
    </citation>
    <scope>GENOME REANNOTATION</scope>
    <source>
        <strain>cv. Columbia</strain>
    </source>
</reference>
<reference key="3">
    <citation type="submission" date="2005-05" db="EMBL/GenBank/DDBJ databases">
        <authorList>
            <person name="Underwood B.A."/>
            <person name="Xiao Y.-L."/>
            <person name="Moskal W.A. Jr."/>
            <person name="Monaghan E.L."/>
            <person name="Wang W."/>
            <person name="Redman J.C."/>
            <person name="Wu H.C."/>
            <person name="Utterback T."/>
            <person name="Town C.D."/>
        </authorList>
    </citation>
    <scope>NUCLEOTIDE SEQUENCE [LARGE SCALE MRNA] OF 59-450</scope>
    <source>
        <strain>cv. Columbia</strain>
    </source>
</reference>
<reference key="4">
    <citation type="submission" date="2006-08" db="EMBL/GenBank/DDBJ databases">
        <title>Arabidopsis ORF Clones.</title>
        <authorList>
            <person name="Quinitio C."/>
            <person name="Chen H."/>
            <person name="Kim C.J."/>
            <person name="Shinn P."/>
            <person name="Ecker J.R."/>
        </authorList>
    </citation>
    <scope>NUCLEOTIDE SEQUENCE [LARGE SCALE MRNA] OF 59-450</scope>
    <source>
        <strain>cv. Columbia</strain>
    </source>
</reference>
<reference key="5">
    <citation type="journal article" date="2006" name="BMC Genomics">
        <title>The maize INDETERMINATE1 flowering time regulator defines a highly conserved zinc finger protein family in higher plants.</title>
        <authorList>
            <person name="Colasanti J."/>
            <person name="Tremblay R."/>
            <person name="Wong A.Y."/>
            <person name="Coneva V."/>
            <person name="Kozaki A."/>
            <person name="Mable B.K."/>
        </authorList>
    </citation>
    <scope>GENE FAMILY</scope>
    <scope>NOMENCLATURE</scope>
</reference>
<protein>
    <recommendedName>
        <fullName evidence="6">Protein indeterminate-domain 13</fullName>
    </recommendedName>
</protein>
<evidence type="ECO:0000250" key="1">
    <source>
        <dbReference type="UniProtKB" id="Q700D2"/>
    </source>
</evidence>
<evidence type="ECO:0000250" key="2">
    <source>
        <dbReference type="UniProtKB" id="Q8GYC1"/>
    </source>
</evidence>
<evidence type="ECO:0000255" key="3">
    <source>
        <dbReference type="PROSITE-ProRule" id="PRU00042"/>
    </source>
</evidence>
<evidence type="ECO:0000255" key="4">
    <source>
        <dbReference type="PROSITE-ProRule" id="PRU00768"/>
    </source>
</evidence>
<evidence type="ECO:0000256" key="5">
    <source>
        <dbReference type="SAM" id="MobiDB-lite"/>
    </source>
</evidence>
<evidence type="ECO:0000303" key="6">
    <source>
    </source>
</evidence>
<evidence type="ECO:0000305" key="7"/>
<evidence type="ECO:0000312" key="8">
    <source>
        <dbReference type="Araport" id="AT5G60470"/>
    </source>
</evidence>
<name>IDD13_ARATH</name>
<sequence length="450" mass="50484">MTASHSLALSMTKSTSPLILTLTLSLQPPLKHPRKRETFQEIQAYPNAEVISLSPKSLMATNRFFCEICNKGFQREQNLQLHKRGHNLPWKLKQKTNKNQVKKKVYICPEKSCVHHDPARALGDLTGIKKHFSRKHGEKKWKCDKCSKKYAVISDWKAHNKICGSREFRCDCGTLFSRKDSFISHRSFCDVLAEESSKFFSVPSPLAANSTIATVTDTNNPILIQSQLDQSSTGTADLNVNNNHTTLFGQKFTNSNPTQQQPNALALSSPPSPRSTSDSVHNLWKLQEEECAHQWLLNEYMNNNKNIFHKGIFKNQEDEIKKGNIYSGSNPTDGNIASLFSYNQEAVNMASFSATTLLQKVAQTGTPSSSETSTTMFGQMTSSIFNNTMLNSYCLTAKNNEEELTRDFLGVGSSEDQQRLHRHRFPSSVPLTANHDIPKLAATIVGRKQP</sequence>
<gene>
    <name evidence="6" type="primary">IDD13</name>
    <name evidence="8" type="ordered locus">At5g60470</name>
</gene>
<comment type="function">
    <text evidence="7">Probable transcription factor.</text>
</comment>
<comment type="subcellular location">
    <subcellularLocation>
        <location evidence="4">Nucleus</location>
    </subcellularLocation>
</comment>
<comment type="sequence caution" evidence="7">
    <conflict type="erroneous gene model prediction">
        <sequence resource="EMBL-CDS" id="BAB08230"/>
    </conflict>
</comment>
<feature type="chain" id="PRO_0000431547" description="Protein indeterminate-domain 13">
    <location>
        <begin position="1"/>
        <end position="450"/>
    </location>
</feature>
<feature type="zinc finger region" description="C2H2-type 1" evidence="3">
    <location>
        <begin position="64"/>
        <end position="86"/>
    </location>
</feature>
<feature type="zinc finger region" description="C2H2-type 2" evidence="7">
    <location>
        <begin position="106"/>
        <end position="136"/>
    </location>
</feature>
<feature type="zinc finger region" description="C2H2-type 2; degenerate" evidence="3">
    <location>
        <begin position="141"/>
        <end position="165"/>
    </location>
</feature>
<feature type="zinc finger region" description="CCHC-type 2; atypical" evidence="7">
    <location>
        <begin position="168"/>
        <end position="191"/>
    </location>
</feature>
<feature type="region of interest" description="SHR-binding" evidence="1">
    <location>
        <begin position="178"/>
        <end position="190"/>
    </location>
</feature>
<feature type="region of interest" description="Disordered" evidence="5">
    <location>
        <begin position="248"/>
        <end position="280"/>
    </location>
</feature>
<feature type="short sequence motif" description="Nuclear localization signal" evidence="4">
    <location>
        <begin position="128"/>
        <end position="135"/>
    </location>
</feature>
<feature type="compositionally biased region" description="Polar residues" evidence="5">
    <location>
        <begin position="248"/>
        <end position="263"/>
    </location>
</feature>
<feature type="binding site" evidence="1">
    <location>
        <position position="143"/>
    </location>
    <ligand>
        <name>Zn(2+)</name>
        <dbReference type="ChEBI" id="CHEBI:29105"/>
        <label>1</label>
    </ligand>
</feature>
<feature type="binding site" evidence="1">
    <location>
        <position position="146"/>
    </location>
    <ligand>
        <name>Zn(2+)</name>
        <dbReference type="ChEBI" id="CHEBI:29105"/>
        <label>1</label>
    </ligand>
</feature>
<feature type="binding site" evidence="1">
    <location>
        <position position="159"/>
    </location>
    <ligand>
        <name>Zn(2+)</name>
        <dbReference type="ChEBI" id="CHEBI:29105"/>
        <label>1</label>
    </ligand>
</feature>
<feature type="binding site" evidence="1">
    <location>
        <position position="163"/>
    </location>
    <ligand>
        <name>Zn(2+)</name>
        <dbReference type="ChEBI" id="CHEBI:29105"/>
        <label>1</label>
    </ligand>
</feature>
<feature type="binding site" evidence="1">
    <location>
        <position position="170"/>
    </location>
    <ligand>
        <name>Zn(2+)</name>
        <dbReference type="ChEBI" id="CHEBI:29105"/>
        <label>2</label>
    </ligand>
</feature>
<feature type="binding site" evidence="1">
    <location>
        <position position="172"/>
    </location>
    <ligand>
        <name>Zn(2+)</name>
        <dbReference type="ChEBI" id="CHEBI:29105"/>
        <label>2</label>
    </ligand>
</feature>
<feature type="binding site" evidence="1">
    <location>
        <position position="185"/>
    </location>
    <ligand>
        <name>Zn(2+)</name>
        <dbReference type="ChEBI" id="CHEBI:29105"/>
        <label>2</label>
    </ligand>
</feature>
<feature type="binding site" evidence="1">
    <location>
        <position position="189"/>
    </location>
    <ligand>
        <name>Zn(2+)</name>
        <dbReference type="ChEBI" id="CHEBI:29105"/>
        <label>2</label>
    </ligand>
</feature>
<feature type="modified residue" description="Phosphoserine" evidence="2">
    <location>
        <position position="54"/>
    </location>
</feature>